<reference key="1">
    <citation type="journal article" date="2009" name="Science">
        <title>The B73 maize genome: complexity, diversity, and dynamics.</title>
        <authorList>
            <person name="Schnable P.S."/>
            <person name="Ware D."/>
            <person name="Fulton R.S."/>
            <person name="Stein J.C."/>
            <person name="Wei F."/>
            <person name="Pasternak S."/>
            <person name="Liang C."/>
            <person name="Zhang J."/>
            <person name="Fulton L."/>
            <person name="Graves T.A."/>
            <person name="Minx P."/>
            <person name="Reily A.D."/>
            <person name="Courtney L."/>
            <person name="Kruchowski S.S."/>
            <person name="Tomlinson C."/>
            <person name="Strong C."/>
            <person name="Delehaunty K."/>
            <person name="Fronick C."/>
            <person name="Courtney B."/>
            <person name="Rock S.M."/>
            <person name="Belter E."/>
            <person name="Du F."/>
            <person name="Kim K."/>
            <person name="Abbott R.M."/>
            <person name="Cotton M."/>
            <person name="Levy A."/>
            <person name="Marchetto P."/>
            <person name="Ochoa K."/>
            <person name="Jackson S.M."/>
            <person name="Gillam B."/>
            <person name="Chen W."/>
            <person name="Yan L."/>
            <person name="Higginbotham J."/>
            <person name="Cardenas M."/>
            <person name="Waligorski J."/>
            <person name="Applebaum E."/>
            <person name="Phelps L."/>
            <person name="Falcone J."/>
            <person name="Kanchi K."/>
            <person name="Thane T."/>
            <person name="Scimone A."/>
            <person name="Thane N."/>
            <person name="Henke J."/>
            <person name="Wang T."/>
            <person name="Ruppert J."/>
            <person name="Shah N."/>
            <person name="Rotter K."/>
            <person name="Hodges J."/>
            <person name="Ingenthron E."/>
            <person name="Cordes M."/>
            <person name="Kohlberg S."/>
            <person name="Sgro J."/>
            <person name="Delgado B."/>
            <person name="Mead K."/>
            <person name="Chinwalla A."/>
            <person name="Leonard S."/>
            <person name="Crouse K."/>
            <person name="Collura K."/>
            <person name="Kudrna D."/>
            <person name="Currie J."/>
            <person name="He R."/>
            <person name="Angelova A."/>
            <person name="Rajasekar S."/>
            <person name="Mueller T."/>
            <person name="Lomeli R."/>
            <person name="Scara G."/>
            <person name="Ko A."/>
            <person name="Delaney K."/>
            <person name="Wissotski M."/>
            <person name="Lopez G."/>
            <person name="Campos D."/>
            <person name="Braidotti M."/>
            <person name="Ashley E."/>
            <person name="Golser W."/>
            <person name="Kim H."/>
            <person name="Lee S."/>
            <person name="Lin J."/>
            <person name="Dujmic Z."/>
            <person name="Kim W."/>
            <person name="Talag J."/>
            <person name="Zuccolo A."/>
            <person name="Fan C."/>
            <person name="Sebastian A."/>
            <person name="Kramer M."/>
            <person name="Spiegel L."/>
            <person name="Nascimento L."/>
            <person name="Zutavern T."/>
            <person name="Miller B."/>
            <person name="Ambroise C."/>
            <person name="Muller S."/>
            <person name="Spooner W."/>
            <person name="Narechania A."/>
            <person name="Ren L."/>
            <person name="Wei S."/>
            <person name="Kumari S."/>
            <person name="Faga B."/>
            <person name="Levy M.J."/>
            <person name="McMahan L."/>
            <person name="Van Buren P."/>
            <person name="Vaughn M.W."/>
            <person name="Ying K."/>
            <person name="Yeh C.-T."/>
            <person name="Emrich S.J."/>
            <person name="Jia Y."/>
            <person name="Kalyanaraman A."/>
            <person name="Hsia A.-P."/>
            <person name="Barbazuk W.B."/>
            <person name="Baucom R.S."/>
            <person name="Brutnell T.P."/>
            <person name="Carpita N.C."/>
            <person name="Chaparro C."/>
            <person name="Chia J.-M."/>
            <person name="Deragon J.-M."/>
            <person name="Estill J.C."/>
            <person name="Fu Y."/>
            <person name="Jeddeloh J.A."/>
            <person name="Han Y."/>
            <person name="Lee H."/>
            <person name="Li P."/>
            <person name="Lisch D.R."/>
            <person name="Liu S."/>
            <person name="Liu Z."/>
            <person name="Nagel D.H."/>
            <person name="McCann M.C."/>
            <person name="SanMiguel P."/>
            <person name="Myers A.M."/>
            <person name="Nettleton D."/>
            <person name="Nguyen J."/>
            <person name="Penning B.W."/>
            <person name="Ponnala L."/>
            <person name="Schneider K.L."/>
            <person name="Schwartz D.C."/>
            <person name="Sharma A."/>
            <person name="Soderlund C."/>
            <person name="Springer N.M."/>
            <person name="Sun Q."/>
            <person name="Wang H."/>
            <person name="Waterman M."/>
            <person name="Westerman R."/>
            <person name="Wolfgruber T.K."/>
            <person name="Yang L."/>
            <person name="Yu Y."/>
            <person name="Zhang L."/>
            <person name="Zhou S."/>
            <person name="Zhu Q."/>
            <person name="Bennetzen J.L."/>
            <person name="Dawe R.K."/>
            <person name="Jiang J."/>
            <person name="Jiang N."/>
            <person name="Presting G.G."/>
            <person name="Wessler S.R."/>
            <person name="Aluru S."/>
            <person name="Martienssen R.A."/>
            <person name="Clifton S.W."/>
            <person name="McCombie W.R."/>
            <person name="Wing R.A."/>
            <person name="Wilson R.K."/>
        </authorList>
    </citation>
    <scope>NUCLEOTIDE SEQUENCE [LARGE SCALE GENOMIC DNA]</scope>
    <source>
        <strain>cv. B73</strain>
    </source>
</reference>
<reference key="2">
    <citation type="submission" date="2013-02" db="EMBL/GenBank/DDBJ databases">
        <authorList>
            <consortium name="Maize Genome Sequencing Project"/>
        </authorList>
    </citation>
    <scope>NUCLEOTIDE SEQUENCE [LARGE SCALE GENOMIC DNA]</scope>
</reference>
<reference key="3">
    <citation type="journal article" date="1991" name="Plant Cell">
        <title>Molecular mechanisms underlying the differential expression of maize pyruvate, orthophosphate dikinase genes.</title>
        <authorList>
            <person name="Sheen J."/>
        </authorList>
    </citation>
    <scope>NUCLEOTIDE SEQUENCE [MRNA] OF 1-90</scope>
    <scope>TISSUE SPECIFICITY</scope>
</reference>
<reference key="4">
    <citation type="journal article" date="2014" name="Plant Physiol.">
        <title>Posttranslational modification of maize chloroplast pyruvate orthophosphate dikinase reveals the precise regulatory mechanism of its enzymatic activity.</title>
        <authorList>
            <person name="Chen Y.B."/>
            <person name="Lu T.C."/>
            <person name="Wang H.X."/>
            <person name="Shen J."/>
            <person name="Bu T.T."/>
            <person name="Chao Q."/>
            <person name="Gao Z.F."/>
            <person name="Zhu X.G."/>
            <person name="Wang Y.F."/>
            <person name="Wang B.C."/>
        </authorList>
    </citation>
    <scope>CLEAVAGE OF INITIATOR METHIONINE</scope>
</reference>
<feature type="initiator methionine" description="Removed" evidence="4">
    <location>
        <position position="1"/>
    </location>
</feature>
<feature type="chain" id="PRO_0000343516" description="Pyruvate, phosphate dikinase 2">
    <location>
        <begin position="2"/>
        <end position="883"/>
    </location>
</feature>
<feature type="region of interest" description="Disordered" evidence="2">
    <location>
        <begin position="1"/>
        <end position="21"/>
    </location>
</feature>
<feature type="active site" description="Tele-phosphohistidine intermediate" evidence="1">
    <location>
        <position position="465"/>
    </location>
</feature>
<feature type="active site" description="Proton donor" evidence="1">
    <location>
        <position position="843"/>
    </location>
</feature>
<feature type="binding site" evidence="1">
    <location>
        <position position="571"/>
    </location>
    <ligand>
        <name>substrate</name>
    </ligand>
</feature>
<feature type="binding site" evidence="1">
    <location>
        <position position="628"/>
    </location>
    <ligand>
        <name>substrate</name>
    </ligand>
</feature>
<feature type="binding site" evidence="1">
    <location>
        <position position="757"/>
    </location>
    <ligand>
        <name>Mg(2+)</name>
        <dbReference type="ChEBI" id="CHEBI:18420"/>
    </ligand>
</feature>
<feature type="binding site" evidence="1">
    <location>
        <position position="757"/>
    </location>
    <ligand>
        <name>substrate</name>
    </ligand>
</feature>
<feature type="binding site" evidence="1">
    <location>
        <position position="778"/>
    </location>
    <ligand>
        <name>substrate</name>
    </ligand>
</feature>
<feature type="binding site" evidence="1">
    <location>
        <position position="779"/>
    </location>
    <ligand>
        <name>substrate</name>
    </ligand>
</feature>
<feature type="binding site" evidence="1">
    <location>
        <position position="780"/>
    </location>
    <ligand>
        <name>substrate</name>
    </ligand>
</feature>
<feature type="binding site" evidence="1">
    <location>
        <position position="781"/>
    </location>
    <ligand>
        <name>Mg(2+)</name>
        <dbReference type="ChEBI" id="CHEBI:18420"/>
    </ligand>
</feature>
<feature type="binding site" evidence="1">
    <location>
        <position position="781"/>
    </location>
    <ligand>
        <name>substrate</name>
    </ligand>
</feature>
<protein>
    <recommendedName>
        <fullName evidence="5">Pyruvate, phosphate dikinase 2</fullName>
        <ecNumber>2.7.9.1</ecNumber>
    </recommendedName>
    <alternativeName>
        <fullName>Pyruvate, orthophosphate dikinase 2</fullName>
    </alternativeName>
</protein>
<accession>Q42368</accession>
<accession>K7UZT6</accession>
<proteinExistence type="evidence at protein level"/>
<evidence type="ECO:0000250" key="1">
    <source>
        <dbReference type="UniProtKB" id="P11155"/>
    </source>
</evidence>
<evidence type="ECO:0000256" key="2">
    <source>
        <dbReference type="SAM" id="MobiDB-lite"/>
    </source>
</evidence>
<evidence type="ECO:0000269" key="3">
    <source>
    </source>
</evidence>
<evidence type="ECO:0000269" key="4">
    <source>
    </source>
</evidence>
<evidence type="ECO:0000303" key="5">
    <source>
    </source>
</evidence>
<evidence type="ECO:0000305" key="6"/>
<evidence type="ECO:0000312" key="7">
    <source>
        <dbReference type="EMBL" id="AFW81976.1"/>
    </source>
</evidence>
<gene>
    <name evidence="5" type="primary">PPDK2</name>
    <name evidence="5" type="synonym">CYPPDKZM2</name>
    <name evidence="7" type="ORF">ZEAMMB73_872355</name>
    <name type="ORF">Zm.19608</name>
</gene>
<organism>
    <name type="scientific">Zea mays</name>
    <name type="common">Maize</name>
    <dbReference type="NCBI Taxonomy" id="4577"/>
    <lineage>
        <taxon>Eukaryota</taxon>
        <taxon>Viridiplantae</taxon>
        <taxon>Streptophyta</taxon>
        <taxon>Embryophyta</taxon>
        <taxon>Tracheophyta</taxon>
        <taxon>Spermatophyta</taxon>
        <taxon>Magnoliopsida</taxon>
        <taxon>Liliopsida</taxon>
        <taxon>Poales</taxon>
        <taxon>Poaceae</taxon>
        <taxon>PACMAD clade</taxon>
        <taxon>Panicoideae</taxon>
        <taxon>Andropogonodae</taxon>
        <taxon>Andropogoneae</taxon>
        <taxon>Tripsacinae</taxon>
        <taxon>Zea</taxon>
    </lineage>
</organism>
<name>PPDK2_MAIZE</name>
<dbReference type="EC" id="2.7.9.1"/>
<dbReference type="EMBL" id="FJ935750">
    <property type="status" value="NOT_ANNOTATED_CDS"/>
    <property type="molecule type" value="Genomic_DNA"/>
</dbReference>
<dbReference type="EMBL" id="FJ935751">
    <property type="status" value="NOT_ANNOTATED_CDS"/>
    <property type="molecule type" value="Genomic_DNA"/>
</dbReference>
<dbReference type="EMBL" id="FJ935752">
    <property type="status" value="NOT_ANNOTATED_CDS"/>
    <property type="molecule type" value="Genomic_DNA"/>
</dbReference>
<dbReference type="EMBL" id="FJ935755">
    <property type="status" value="NOT_ANNOTATED_CDS"/>
    <property type="molecule type" value="Genomic_DNA"/>
</dbReference>
<dbReference type="EMBL" id="FJ935756">
    <property type="status" value="NOT_ANNOTATED_CDS"/>
    <property type="molecule type" value="Genomic_DNA"/>
</dbReference>
<dbReference type="EMBL" id="FJ935757">
    <property type="status" value="NOT_ANNOTATED_CDS"/>
    <property type="molecule type" value="Genomic_DNA"/>
</dbReference>
<dbReference type="EMBL" id="FJ935759">
    <property type="status" value="NOT_ANNOTATED_CDS"/>
    <property type="molecule type" value="Genomic_DNA"/>
</dbReference>
<dbReference type="EMBL" id="FJ935761">
    <property type="status" value="NOT_ANNOTATED_CDS"/>
    <property type="molecule type" value="Genomic_DNA"/>
</dbReference>
<dbReference type="EMBL" id="FJ935762">
    <property type="status" value="NOT_ANNOTATED_CDS"/>
    <property type="molecule type" value="Genomic_DNA"/>
</dbReference>
<dbReference type="EMBL" id="FJ935763">
    <property type="status" value="NOT_ANNOTATED_CDS"/>
    <property type="molecule type" value="Genomic_DNA"/>
</dbReference>
<dbReference type="EMBL" id="FJ935764">
    <property type="status" value="NOT_ANNOTATED_CDS"/>
    <property type="molecule type" value="Genomic_DNA"/>
</dbReference>
<dbReference type="EMBL" id="FJ935768">
    <property type="status" value="NOT_ANNOTATED_CDS"/>
    <property type="molecule type" value="Genomic_DNA"/>
</dbReference>
<dbReference type="EMBL" id="FJ935778">
    <property type="status" value="NOT_ANNOTATED_CDS"/>
    <property type="molecule type" value="Genomic_DNA"/>
</dbReference>
<dbReference type="EMBL" id="CM000784">
    <property type="protein sequence ID" value="AFW81976.1"/>
    <property type="molecule type" value="Genomic_DNA"/>
</dbReference>
<dbReference type="EMBL" id="S46967">
    <property type="protein sequence ID" value="AAB23732.1"/>
    <property type="molecule type" value="Genomic_DNA"/>
</dbReference>
<dbReference type="PIR" id="PQ0191">
    <property type="entry name" value="PQ0191"/>
</dbReference>
<dbReference type="RefSeq" id="XP_008656296.1">
    <property type="nucleotide sequence ID" value="XM_008658074.1"/>
</dbReference>
<dbReference type="SMR" id="Q42368"/>
<dbReference type="FunCoup" id="Q42368">
    <property type="interactions" value="489"/>
</dbReference>
<dbReference type="STRING" id="4577.Q42368"/>
<dbReference type="PaxDb" id="4577-GRMZM2G097457_P01"/>
<dbReference type="EnsemblPlants" id="Zm00001eb349810_T002">
    <property type="protein sequence ID" value="Zm00001eb349810_P002"/>
    <property type="gene ID" value="Zm00001eb349810"/>
</dbReference>
<dbReference type="Gramene" id="Zm00001eb349810_T002">
    <property type="protein sequence ID" value="Zm00001eb349810_P002"/>
    <property type="gene ID" value="Zm00001eb349810"/>
</dbReference>
<dbReference type="eggNOG" id="ENOG502QREJ">
    <property type="taxonomic scope" value="Eukaryota"/>
</dbReference>
<dbReference type="HOGENOM" id="CLU_015345_0_2_1"/>
<dbReference type="InParanoid" id="Q42368"/>
<dbReference type="OrthoDB" id="6123450at2759"/>
<dbReference type="BRENDA" id="2.7.9.1">
    <property type="organism ID" value="6752"/>
</dbReference>
<dbReference type="Proteomes" id="UP000007305">
    <property type="component" value="Chromosome 8"/>
</dbReference>
<dbReference type="ExpressionAtlas" id="Q42368">
    <property type="expression patterns" value="baseline and differential"/>
</dbReference>
<dbReference type="GO" id="GO:0005737">
    <property type="term" value="C:cytoplasm"/>
    <property type="evidence" value="ECO:0007669"/>
    <property type="project" value="UniProtKB-SubCell"/>
</dbReference>
<dbReference type="GO" id="GO:0005524">
    <property type="term" value="F:ATP binding"/>
    <property type="evidence" value="ECO:0007669"/>
    <property type="project" value="UniProtKB-KW"/>
</dbReference>
<dbReference type="GO" id="GO:0016301">
    <property type="term" value="F:kinase activity"/>
    <property type="evidence" value="ECO:0007669"/>
    <property type="project" value="UniProtKB-KW"/>
</dbReference>
<dbReference type="GO" id="GO:0046872">
    <property type="term" value="F:metal ion binding"/>
    <property type="evidence" value="ECO:0007669"/>
    <property type="project" value="UniProtKB-KW"/>
</dbReference>
<dbReference type="GO" id="GO:0050242">
    <property type="term" value="F:pyruvate, phosphate dikinase activity"/>
    <property type="evidence" value="ECO:0007669"/>
    <property type="project" value="UniProtKB-EC"/>
</dbReference>
<dbReference type="GO" id="GO:0015979">
    <property type="term" value="P:photosynthesis"/>
    <property type="evidence" value="ECO:0007669"/>
    <property type="project" value="UniProtKB-KW"/>
</dbReference>
<dbReference type="FunFam" id="3.20.20.60:FF:000040">
    <property type="entry name" value="Pyruvate, phosphate dikinase, chloroplastic"/>
    <property type="match status" value="1"/>
</dbReference>
<dbReference type="FunFam" id="3.30.470.20:FF:000038">
    <property type="entry name" value="Pyruvate, phosphate dikinase, chloroplastic"/>
    <property type="match status" value="1"/>
</dbReference>
<dbReference type="FunFam" id="3.50.30.10:FF:000009">
    <property type="entry name" value="Pyruvate, phosphate dikinase, chloroplastic"/>
    <property type="match status" value="1"/>
</dbReference>
<dbReference type="Gene3D" id="1.20.80.30">
    <property type="match status" value="1"/>
</dbReference>
<dbReference type="Gene3D" id="3.30.1490.20">
    <property type="entry name" value="ATP-grasp fold, A domain"/>
    <property type="match status" value="1"/>
</dbReference>
<dbReference type="Gene3D" id="3.30.470.20">
    <property type="entry name" value="ATP-grasp fold, B domain"/>
    <property type="match status" value="1"/>
</dbReference>
<dbReference type="Gene3D" id="3.20.20.60">
    <property type="entry name" value="Phosphoenolpyruvate-binding domains"/>
    <property type="match status" value="1"/>
</dbReference>
<dbReference type="Gene3D" id="3.50.30.10">
    <property type="entry name" value="Phosphohistidine domain"/>
    <property type="match status" value="1"/>
</dbReference>
<dbReference type="Gene3D" id="1.10.189.10">
    <property type="entry name" value="Pyruvate Phosphate Dikinase, domain 2"/>
    <property type="match status" value="1"/>
</dbReference>
<dbReference type="InterPro" id="IPR013815">
    <property type="entry name" value="ATP_grasp_subdomain_1"/>
</dbReference>
<dbReference type="InterPro" id="IPR008279">
    <property type="entry name" value="PEP-util_enz_mobile_dom"/>
</dbReference>
<dbReference type="InterPro" id="IPR018274">
    <property type="entry name" value="PEP_util_AS"/>
</dbReference>
<dbReference type="InterPro" id="IPR000121">
    <property type="entry name" value="PEP_util_C"/>
</dbReference>
<dbReference type="InterPro" id="IPR023151">
    <property type="entry name" value="PEP_util_CS"/>
</dbReference>
<dbReference type="InterPro" id="IPR036637">
    <property type="entry name" value="Phosphohistidine_dom_sf"/>
</dbReference>
<dbReference type="InterPro" id="IPR002192">
    <property type="entry name" value="PPDK_AMP/ATP-bd"/>
</dbReference>
<dbReference type="InterPro" id="IPR010121">
    <property type="entry name" value="Pyruvate_phosphate_dikinase"/>
</dbReference>
<dbReference type="InterPro" id="IPR015813">
    <property type="entry name" value="Pyrv/PenolPyrv_kinase-like_dom"/>
</dbReference>
<dbReference type="InterPro" id="IPR040442">
    <property type="entry name" value="Pyrv_kinase-like_dom_sf"/>
</dbReference>
<dbReference type="NCBIfam" id="NF004531">
    <property type="entry name" value="PRK05878.1"/>
    <property type="match status" value="1"/>
</dbReference>
<dbReference type="NCBIfam" id="TIGR01828">
    <property type="entry name" value="pyru_phos_dikin"/>
    <property type="match status" value="1"/>
</dbReference>
<dbReference type="PANTHER" id="PTHR22931">
    <property type="entry name" value="PHOSPHOENOLPYRUVATE DIKINASE-RELATED"/>
    <property type="match status" value="1"/>
</dbReference>
<dbReference type="PANTHER" id="PTHR22931:SF9">
    <property type="entry name" value="PYRUVATE, PHOSPHATE DIKINASE 1, CHLOROPLASTIC"/>
    <property type="match status" value="1"/>
</dbReference>
<dbReference type="Pfam" id="PF00391">
    <property type="entry name" value="PEP-utilizers"/>
    <property type="match status" value="1"/>
</dbReference>
<dbReference type="Pfam" id="PF02896">
    <property type="entry name" value="PEP-utilizers_C"/>
    <property type="match status" value="1"/>
</dbReference>
<dbReference type="Pfam" id="PF01326">
    <property type="entry name" value="PPDK_N"/>
    <property type="match status" value="3"/>
</dbReference>
<dbReference type="PIRSF" id="PIRSF000853">
    <property type="entry name" value="PPDK"/>
    <property type="match status" value="1"/>
</dbReference>
<dbReference type="SUPFAM" id="SSF56059">
    <property type="entry name" value="Glutathione synthetase ATP-binding domain-like"/>
    <property type="match status" value="1"/>
</dbReference>
<dbReference type="SUPFAM" id="SSF51621">
    <property type="entry name" value="Phosphoenolpyruvate/pyruvate domain"/>
    <property type="match status" value="1"/>
</dbReference>
<dbReference type="SUPFAM" id="SSF52009">
    <property type="entry name" value="Phosphohistidine domain"/>
    <property type="match status" value="1"/>
</dbReference>
<dbReference type="PROSITE" id="PS00742">
    <property type="entry name" value="PEP_ENZYMES_2"/>
    <property type="match status" value="1"/>
</dbReference>
<dbReference type="PROSITE" id="PS00370">
    <property type="entry name" value="PEP_ENZYMES_PHOS_SITE"/>
    <property type="match status" value="1"/>
</dbReference>
<keyword id="KW-0067">ATP-binding</keyword>
<keyword id="KW-0963">Cytoplasm</keyword>
<keyword id="KW-0418">Kinase</keyword>
<keyword id="KW-0460">Magnesium</keyword>
<keyword id="KW-0479">Metal-binding</keyword>
<keyword id="KW-0547">Nucleotide-binding</keyword>
<keyword id="KW-0602">Photosynthesis</keyword>
<keyword id="KW-1185">Reference proteome</keyword>
<keyword id="KW-0808">Transferase</keyword>
<sequence length="883" mass="96076">MAPAPCGRSSQRVFHFGKGKSEGNKNMKELLGGKGANLAEMASIGLSVPPGFTVSTEACQQYQEAGRALPPGLWAEVLDGLRWVEEYMGAALGDPRRPLLLSVRSGAAVSMPGMMDTVLNLGLNDQVAAGLAAKSGDRFAYDSFRRFLDMFGNVVMDIPHALFEEKLEAMKKAKGLKNDTDLTATDLKELVSQYKNVYVEAKGEPFPSDPKRQLELAVLAVFDSWESPRAKKYRSINQITGLRGTAVNVQCMVFGNMGNTSGTGVLFTRNPNTGEKKLYGEFLVNAQGEDVVAGIRTPEDLDAMKDVMPQAYKELVENCRILESHYKEMQDIEFTVQESRLWMLQCRTGKRTGKSAVKIAVDMVNEGLVERRAAIKMVEPGHLDQLLHPQFENPSAYKDQVIATGLPASPGAAVGQVVFTAEDAETWHSQGKSVILVRAETSPEDVGGMHAAAGILTERGGMTSHAAVVARGWGKCCVSGCSGIRVNDAEKVVKIGGNVLREGEWLSLNGSTGEVILGKQPLSPPALSGDLGTFMSWVDDVRKLKVLANADTPEDALAARNNGAEGIGLCRTEHMFFASDERIKAVRQMIMAPTVELRQQALDRLLPYQRSDFEGIFRAMDGLSVTIRLLDPPLHEFLPEGNVEEIVRELCSETGANQEDALARIEKLSEVNPMLGFRGCRLGISYPELTEMQARAIFEAAIAMTNQGVQVFPEIMVPLVGTPQELGHQVALIRQVANKVFTSMGKTIGYKIGTMIEIPRAALVADEIAEQAEFFSFGTNDLTQMTFGYSRDDVGKFIPIYLAQGILQHDPFEVLDQRGVGELVKLATERGRKARPNLKVGICGEHGGEPSSVAFFAKTGLDYVSCSPFRVPIARLAAAQVLV</sequence>
<comment type="function">
    <text>Formation of phosphoenolpyruvate, which is the primary acceptor of CO(2) in C4 and some Crassulacean acid metabolism plants.</text>
</comment>
<comment type="catalytic activity">
    <reaction>
        <text>pyruvate + phosphate + ATP = phosphoenolpyruvate + AMP + diphosphate + H(+)</text>
        <dbReference type="Rhea" id="RHEA:10756"/>
        <dbReference type="ChEBI" id="CHEBI:15361"/>
        <dbReference type="ChEBI" id="CHEBI:15378"/>
        <dbReference type="ChEBI" id="CHEBI:30616"/>
        <dbReference type="ChEBI" id="CHEBI:33019"/>
        <dbReference type="ChEBI" id="CHEBI:43474"/>
        <dbReference type="ChEBI" id="CHEBI:58702"/>
        <dbReference type="ChEBI" id="CHEBI:456215"/>
        <dbReference type="EC" id="2.7.9.1"/>
    </reaction>
</comment>
<comment type="cofactor">
    <cofactor evidence="1">
        <name>Mg(2+)</name>
        <dbReference type="ChEBI" id="CHEBI:18420"/>
    </cofactor>
</comment>
<comment type="subcellular location">
    <subcellularLocation>
        <location>Cytoplasm</location>
    </subcellularLocation>
</comment>
<comment type="tissue specificity">
    <text evidence="3">Expressed in leaves, roots and stems.</text>
</comment>
<comment type="miscellaneous">
    <text evidence="6">PubMed:1668653 shows the existence of a second gene coding for both cytoplasmic and chloroplastic isoforms of PPDK.</text>
</comment>
<comment type="similarity">
    <text evidence="6">Belongs to the PEP-utilizing enzyme family.</text>
</comment>